<reference key="1">
    <citation type="journal article" date="2010" name="J. Bacteriol.">
        <title>Genome sequence of Pantoea ananatis LMG20103, the causative agent of Eucalyptus blight and dieback.</title>
        <authorList>
            <person name="De Maayer P."/>
            <person name="Chan W.Y."/>
            <person name="Venter S.N."/>
            <person name="Toth I.K."/>
            <person name="Birch P.R."/>
            <person name="Joubert F."/>
            <person name="Coutinho T.A."/>
        </authorList>
    </citation>
    <scope>NUCLEOTIDE SEQUENCE [LARGE SCALE GENOMIC DNA]</scope>
    <source>
        <strain>LMG 20103</strain>
    </source>
</reference>
<feature type="signal peptide" evidence="1">
    <location>
        <begin position="1"/>
        <end position="24"/>
    </location>
</feature>
<feature type="chain" id="PRO_0000414466" description="Lipid A acyltransferase PagP">
    <location>
        <begin position="25"/>
        <end position="190"/>
    </location>
</feature>
<feature type="active site" evidence="1">
    <location>
        <position position="62"/>
    </location>
</feature>
<feature type="active site" evidence="1">
    <location>
        <position position="105"/>
    </location>
</feature>
<feature type="active site" evidence="1">
    <location>
        <position position="106"/>
    </location>
</feature>
<feature type="site" description="Role in the phospholipid gating" evidence="1">
    <location>
        <position position="176"/>
    </location>
</feature>
<proteinExistence type="inferred from homology"/>
<evidence type="ECO:0000255" key="1">
    <source>
        <dbReference type="HAMAP-Rule" id="MF_00837"/>
    </source>
</evidence>
<evidence type="ECO:0000305" key="2"/>
<accession>D4GM10</accession>
<sequence length="190" mass="22133">MNRYLLTTLSAPLLALFFSFSLQAAMLSQEIKSGWDTFTGNVQQTWQQPDAIDVYVPAITWHNRWTYDEEHIHRYNERPWGAGGGVSRYDEKGNWHGLYLMAFKDSFNKWEPFGGYGWEATWRPLQDQNFHYGLGYTAGVTARHNWGYYPVPAILPLASIGYGSLNFQMTYIPGTYNNGNVYFAWLRWQF</sequence>
<comment type="function">
    <text evidence="1">Transfers a fatty acid residue from the sn-1 position of a phospholipid to the N-linked hydroxyfatty acid chain on the proximal unit of lipid A or its precursors.</text>
</comment>
<comment type="catalytic activity">
    <reaction evidence="1">
        <text>a lipid A + a 1,2-diacyl-sn-glycero-3-phosphocholine = a hepta-acyl lipid A + a 2-acyl-sn-glycero-3-phosphocholine</text>
        <dbReference type="Rhea" id="RHEA:74275"/>
        <dbReference type="ChEBI" id="CHEBI:57643"/>
        <dbReference type="ChEBI" id="CHEBI:57875"/>
        <dbReference type="ChEBI" id="CHEBI:193141"/>
        <dbReference type="ChEBI" id="CHEBI:193142"/>
        <dbReference type="EC" id="2.3.1.251"/>
    </reaction>
</comment>
<comment type="catalytic activity">
    <reaction evidence="1">
        <text>a lipid IVA + a 1,2-diacyl-sn-glycero-3-phosphocholine = a lipid IVB + a 2-acyl-sn-glycero-3-phosphocholine</text>
        <dbReference type="Rhea" id="RHEA:74279"/>
        <dbReference type="ChEBI" id="CHEBI:57643"/>
        <dbReference type="ChEBI" id="CHEBI:57875"/>
        <dbReference type="ChEBI" id="CHEBI:176425"/>
        <dbReference type="ChEBI" id="CHEBI:193143"/>
        <dbReference type="EC" id="2.3.1.251"/>
    </reaction>
</comment>
<comment type="catalytic activity">
    <reaction evidence="1">
        <text>a lipid IIA + a 1,2-diacyl-sn-glycero-3-phosphocholine = a lipid IIB + a 2-acyl-sn-glycero-3-phosphocholine</text>
        <dbReference type="Rhea" id="RHEA:74283"/>
        <dbReference type="ChEBI" id="CHEBI:57643"/>
        <dbReference type="ChEBI" id="CHEBI:57875"/>
        <dbReference type="ChEBI" id="CHEBI:193144"/>
        <dbReference type="ChEBI" id="CHEBI:193145"/>
        <dbReference type="EC" id="2.3.1.251"/>
    </reaction>
</comment>
<comment type="subunit">
    <text evidence="1">Homodimer.</text>
</comment>
<comment type="subcellular location">
    <subcellularLocation>
        <location evidence="1">Cell outer membrane</location>
    </subcellularLocation>
</comment>
<comment type="similarity">
    <text evidence="1 2">Belongs to the lipid A palmitoyltransferase family.</text>
</comment>
<comment type="sequence caution" evidence="2">
    <conflict type="erroneous initiation">
        <sequence resource="EMBL-CDS" id="ADD76280"/>
    </conflict>
    <text>Truncated N-terminus.</text>
</comment>
<protein>
    <recommendedName>
        <fullName evidence="1">Lipid A acyltransferase PagP</fullName>
        <ecNumber evidence="1">2.3.1.251</ecNumber>
    </recommendedName>
    <alternativeName>
        <fullName evidence="1">Lipid A acylation protein</fullName>
    </alternativeName>
</protein>
<organism>
    <name type="scientific">Pantoea ananatis (strain LMG 20103)</name>
    <dbReference type="NCBI Taxonomy" id="706191"/>
    <lineage>
        <taxon>Bacteria</taxon>
        <taxon>Pseudomonadati</taxon>
        <taxon>Pseudomonadota</taxon>
        <taxon>Gammaproteobacteria</taxon>
        <taxon>Enterobacterales</taxon>
        <taxon>Erwiniaceae</taxon>
        <taxon>Pantoea</taxon>
    </lineage>
</organism>
<dbReference type="EC" id="2.3.1.251" evidence="1"/>
<dbReference type="EMBL" id="CP001875">
    <property type="protein sequence ID" value="ADD76280.1"/>
    <property type="status" value="ALT_INIT"/>
    <property type="molecule type" value="Genomic_DNA"/>
</dbReference>
<dbReference type="RefSeq" id="WP_015700757.1">
    <property type="nucleotide sequence ID" value="NC_013956.2"/>
</dbReference>
<dbReference type="SMR" id="D4GM10"/>
<dbReference type="STRING" id="706191.PANA_1113"/>
<dbReference type="KEGG" id="pam:PANA_1113"/>
<dbReference type="PATRIC" id="fig|553.3.peg.3199"/>
<dbReference type="eggNOG" id="ENOG502Z7SY">
    <property type="taxonomic scope" value="Bacteria"/>
</dbReference>
<dbReference type="HOGENOM" id="CLU_104099_0_0_6"/>
<dbReference type="Proteomes" id="UP000001702">
    <property type="component" value="Chromosome"/>
</dbReference>
<dbReference type="GO" id="GO:0009279">
    <property type="term" value="C:cell outer membrane"/>
    <property type="evidence" value="ECO:0007669"/>
    <property type="project" value="UniProtKB-SubCell"/>
</dbReference>
<dbReference type="GO" id="GO:0016746">
    <property type="term" value="F:acyltransferase activity"/>
    <property type="evidence" value="ECO:0007669"/>
    <property type="project" value="UniProtKB-UniRule"/>
</dbReference>
<dbReference type="GO" id="GO:0009245">
    <property type="term" value="P:lipid A biosynthetic process"/>
    <property type="evidence" value="ECO:0007669"/>
    <property type="project" value="UniProtKB-UniRule"/>
</dbReference>
<dbReference type="FunFam" id="2.40.160.20:FF:000002">
    <property type="entry name" value="Lipid A palmitoyltransferase PagP"/>
    <property type="match status" value="1"/>
</dbReference>
<dbReference type="Gene3D" id="2.40.160.20">
    <property type="match status" value="1"/>
</dbReference>
<dbReference type="HAMAP" id="MF_00837">
    <property type="entry name" value="PagP_transferase"/>
    <property type="match status" value="1"/>
</dbReference>
<dbReference type="InterPro" id="IPR009746">
    <property type="entry name" value="LipidA_acyl_PagP"/>
</dbReference>
<dbReference type="InterPro" id="IPR011250">
    <property type="entry name" value="OMP/PagP_b-brl"/>
</dbReference>
<dbReference type="NCBIfam" id="NF008271">
    <property type="entry name" value="PRK11045.1"/>
    <property type="match status" value="1"/>
</dbReference>
<dbReference type="Pfam" id="PF07017">
    <property type="entry name" value="PagP"/>
    <property type="match status" value="1"/>
</dbReference>
<dbReference type="SUPFAM" id="SSF56925">
    <property type="entry name" value="OMPA-like"/>
    <property type="match status" value="1"/>
</dbReference>
<gene>
    <name evidence="1" type="primary">pagP</name>
    <name type="synonym">crcA</name>
    <name type="ordered locus">PANA_1113</name>
</gene>
<name>PAGP_PANAM</name>
<keyword id="KW-0012">Acyltransferase</keyword>
<keyword id="KW-0998">Cell outer membrane</keyword>
<keyword id="KW-0472">Membrane</keyword>
<keyword id="KW-1185">Reference proteome</keyword>
<keyword id="KW-0732">Signal</keyword>
<keyword id="KW-0808">Transferase</keyword>